<proteinExistence type="inferred from homology"/>
<dbReference type="EC" id="6.3.2.2" evidence="1"/>
<dbReference type="EMBL" id="AE004091">
    <property type="protein sequence ID" value="AAG08588.1"/>
    <property type="molecule type" value="Genomic_DNA"/>
</dbReference>
<dbReference type="PIR" id="F82995">
    <property type="entry name" value="F82995"/>
</dbReference>
<dbReference type="RefSeq" id="NP_253890.1">
    <property type="nucleotide sequence ID" value="NC_002516.2"/>
</dbReference>
<dbReference type="RefSeq" id="WP_003109990.1">
    <property type="nucleotide sequence ID" value="NZ_QZGE01000002.1"/>
</dbReference>
<dbReference type="SMR" id="Q9HTY6"/>
<dbReference type="FunCoup" id="Q9HTY6">
    <property type="interactions" value="197"/>
</dbReference>
<dbReference type="STRING" id="208964.PA5203"/>
<dbReference type="PaxDb" id="208964-PA5203"/>
<dbReference type="GeneID" id="879474"/>
<dbReference type="KEGG" id="pae:PA5203"/>
<dbReference type="PATRIC" id="fig|208964.12.peg.5453"/>
<dbReference type="PseudoCAP" id="PA5203"/>
<dbReference type="HOGENOM" id="CLU_020728_3_0_6"/>
<dbReference type="InParanoid" id="Q9HTY6"/>
<dbReference type="OrthoDB" id="9803907at2"/>
<dbReference type="PhylomeDB" id="Q9HTY6"/>
<dbReference type="BioCyc" id="PAER208964:G1FZ6-5322-MONOMER"/>
<dbReference type="UniPathway" id="UPA00142">
    <property type="reaction ID" value="UER00209"/>
</dbReference>
<dbReference type="PHI-base" id="PHI:11327"/>
<dbReference type="PHI-base" id="PHI:9280"/>
<dbReference type="Proteomes" id="UP000002438">
    <property type="component" value="Chromosome"/>
</dbReference>
<dbReference type="GO" id="GO:0005829">
    <property type="term" value="C:cytosol"/>
    <property type="evidence" value="ECO:0000318"/>
    <property type="project" value="GO_Central"/>
</dbReference>
<dbReference type="GO" id="GO:0005524">
    <property type="term" value="F:ATP binding"/>
    <property type="evidence" value="ECO:0007669"/>
    <property type="project" value="UniProtKB-KW"/>
</dbReference>
<dbReference type="GO" id="GO:0004357">
    <property type="term" value="F:glutamate-cysteine ligase activity"/>
    <property type="evidence" value="ECO:0000318"/>
    <property type="project" value="GO_Central"/>
</dbReference>
<dbReference type="GO" id="GO:0046872">
    <property type="term" value="F:metal ion binding"/>
    <property type="evidence" value="ECO:0000318"/>
    <property type="project" value="GO_Central"/>
</dbReference>
<dbReference type="GO" id="GO:0006750">
    <property type="term" value="P:glutathione biosynthetic process"/>
    <property type="evidence" value="ECO:0000318"/>
    <property type="project" value="GO_Central"/>
</dbReference>
<dbReference type="FunFam" id="3.30.590.20:FF:000007">
    <property type="entry name" value="Glutamate--cysteine ligase"/>
    <property type="match status" value="1"/>
</dbReference>
<dbReference type="Gene3D" id="3.30.590.20">
    <property type="match status" value="1"/>
</dbReference>
<dbReference type="HAMAP" id="MF_00578">
    <property type="entry name" value="Glu_cys_ligase"/>
    <property type="match status" value="1"/>
</dbReference>
<dbReference type="InterPro" id="IPR014746">
    <property type="entry name" value="Gln_synth/guanido_kin_cat_dom"/>
</dbReference>
<dbReference type="InterPro" id="IPR007370">
    <property type="entry name" value="Glu_cys_ligase"/>
</dbReference>
<dbReference type="InterPro" id="IPR006334">
    <property type="entry name" value="Glut_cys_ligase"/>
</dbReference>
<dbReference type="NCBIfam" id="TIGR01434">
    <property type="entry name" value="glu_cys_ligase"/>
    <property type="match status" value="1"/>
</dbReference>
<dbReference type="PANTHER" id="PTHR38761">
    <property type="entry name" value="GLUTAMATE--CYSTEINE LIGASE"/>
    <property type="match status" value="1"/>
</dbReference>
<dbReference type="PANTHER" id="PTHR38761:SF1">
    <property type="entry name" value="GLUTAMATE--CYSTEINE LIGASE"/>
    <property type="match status" value="1"/>
</dbReference>
<dbReference type="Pfam" id="PF04262">
    <property type="entry name" value="Glu_cys_ligase"/>
    <property type="match status" value="1"/>
</dbReference>
<dbReference type="SUPFAM" id="SSF55931">
    <property type="entry name" value="Glutamine synthetase/guanido kinase"/>
    <property type="match status" value="1"/>
</dbReference>
<name>GSH1_PSEAE</name>
<protein>
    <recommendedName>
        <fullName evidence="1">Glutamate--cysteine ligase</fullName>
        <ecNumber evidence="1">6.3.2.2</ecNumber>
    </recommendedName>
    <alternativeName>
        <fullName evidence="1">Gamma-ECS</fullName>
        <shortName evidence="1">GCS</shortName>
    </alternativeName>
    <alternativeName>
        <fullName evidence="1">Gamma-glutamylcysteine synthetase</fullName>
    </alternativeName>
</protein>
<evidence type="ECO:0000255" key="1">
    <source>
        <dbReference type="HAMAP-Rule" id="MF_00578"/>
    </source>
</evidence>
<organism>
    <name type="scientific">Pseudomonas aeruginosa (strain ATCC 15692 / DSM 22644 / CIP 104116 / JCM 14847 / LMG 12228 / 1C / PRS 101 / PAO1)</name>
    <dbReference type="NCBI Taxonomy" id="208964"/>
    <lineage>
        <taxon>Bacteria</taxon>
        <taxon>Pseudomonadati</taxon>
        <taxon>Pseudomonadota</taxon>
        <taxon>Gammaproteobacteria</taxon>
        <taxon>Pseudomonadales</taxon>
        <taxon>Pseudomonadaceae</taxon>
        <taxon>Pseudomonas</taxon>
    </lineage>
</organism>
<accession>Q9HTY6</accession>
<reference key="1">
    <citation type="journal article" date="2000" name="Nature">
        <title>Complete genome sequence of Pseudomonas aeruginosa PAO1, an opportunistic pathogen.</title>
        <authorList>
            <person name="Stover C.K."/>
            <person name="Pham X.-Q.T."/>
            <person name="Erwin A.L."/>
            <person name="Mizoguchi S.D."/>
            <person name="Warrener P."/>
            <person name="Hickey M.J."/>
            <person name="Brinkman F.S.L."/>
            <person name="Hufnagle W.O."/>
            <person name="Kowalik D.J."/>
            <person name="Lagrou M."/>
            <person name="Garber R.L."/>
            <person name="Goltry L."/>
            <person name="Tolentino E."/>
            <person name="Westbrock-Wadman S."/>
            <person name="Yuan Y."/>
            <person name="Brody L.L."/>
            <person name="Coulter S.N."/>
            <person name="Folger K.R."/>
            <person name="Kas A."/>
            <person name="Larbig K."/>
            <person name="Lim R.M."/>
            <person name="Smith K.A."/>
            <person name="Spencer D.H."/>
            <person name="Wong G.K.-S."/>
            <person name="Wu Z."/>
            <person name="Paulsen I.T."/>
            <person name="Reizer J."/>
            <person name="Saier M.H. Jr."/>
            <person name="Hancock R.E.W."/>
            <person name="Lory S."/>
            <person name="Olson M.V."/>
        </authorList>
    </citation>
    <scope>NUCLEOTIDE SEQUENCE [LARGE SCALE GENOMIC DNA]</scope>
    <source>
        <strain>ATCC 15692 / DSM 22644 / CIP 104116 / JCM 14847 / LMG 12228 / 1C / PRS 101 / PAO1</strain>
    </source>
</reference>
<sequence length="527" mass="59224">MSDLLSRRLALLGAAANLPLLTECLHGIERECLRVDSDGKLALTPHPRALGSTLTHPQITTDYSEALLEFITPTETDVADTLGDLERIHRFASSKLDGEYLWSPSMPCELPDEESIPIARYGSSMIGRLKYVYRKGLALRYGKTMQCIAGIHYNFSLPERLWPLLRQAEGSELSERDYQSAAYIALIRNFRRYSWLLMYLFGASPALDAGFLRGRPSQLERLDEHTLYLPYATSLRMSDLGYQNNAQAGLTPCYNDLQSYIDSLRQAVSTPYPPYEKVGTKQDGEWVQLNTNILQIENEYYSSIRPKRVTYTGERPVQALAARGVQYVEVRCLDINPFLPLGIDLDEARFLDAFLLFCAFSDSPLLNGECSDATDNFLAVVKEGRRPGLQLQRRGQPVELQVWANELLERIADTAALLDRARGGEAHAAALAAQRAKVADAELTPSAQVLKVMRERGESFEAFSLRQSREHAEYFRQHPLAAEEQARFEKMASDSLAEQTELERDQDGDFDTFVAAYQASILGLISN</sequence>
<feature type="chain" id="PRO_0000192532" description="Glutamate--cysteine ligase">
    <location>
        <begin position="1"/>
        <end position="527"/>
    </location>
</feature>
<comment type="catalytic activity">
    <reaction evidence="1">
        <text>L-cysteine + L-glutamate + ATP = gamma-L-glutamyl-L-cysteine + ADP + phosphate + H(+)</text>
        <dbReference type="Rhea" id="RHEA:13285"/>
        <dbReference type="ChEBI" id="CHEBI:15378"/>
        <dbReference type="ChEBI" id="CHEBI:29985"/>
        <dbReference type="ChEBI" id="CHEBI:30616"/>
        <dbReference type="ChEBI" id="CHEBI:35235"/>
        <dbReference type="ChEBI" id="CHEBI:43474"/>
        <dbReference type="ChEBI" id="CHEBI:58173"/>
        <dbReference type="ChEBI" id="CHEBI:456216"/>
        <dbReference type="EC" id="6.3.2.2"/>
    </reaction>
</comment>
<comment type="pathway">
    <text evidence="1">Sulfur metabolism; glutathione biosynthesis; glutathione from L-cysteine and L-glutamate: step 1/2.</text>
</comment>
<comment type="similarity">
    <text evidence="1">Belongs to the glutamate--cysteine ligase type 1 family. Type 1 subfamily.</text>
</comment>
<keyword id="KW-0067">ATP-binding</keyword>
<keyword id="KW-0317">Glutathione biosynthesis</keyword>
<keyword id="KW-0436">Ligase</keyword>
<keyword id="KW-0547">Nucleotide-binding</keyword>
<keyword id="KW-1185">Reference proteome</keyword>
<gene>
    <name evidence="1" type="primary">gshA</name>
    <name type="ordered locus">PA5203</name>
</gene>